<sequence>MASSSLLLASVVVAAMVSAVSCGPPKVPPGPNITASYGDKWLEARATWYGAAKGAGRKDNSGACGYKDVDKAPFLGMNSCGNDPIFKDGKGCGSCFEIKCSKPKACSDKPVLIHVTDMNDEPIAAYHFDLFGLAFGAMAKDGKDEELLKYVAGDGDVVEVEIKEKGSEEWKALKESWGAIWRIDTPKPLKGPFSVRVTTEGGEKIIAEDAIPDGWKADSVYKSNVQAK</sequence>
<gene>
    <name type="primary">EXPB13</name>
    <name type="ordered locus">Os03g0106700</name>
    <name type="ordered locus">LOC_Os03g01630</name>
    <name type="ORF">OSJNBa0009C08.17</name>
</gene>
<proteinExistence type="inferred from homology"/>
<evidence type="ECO:0000250" key="1"/>
<evidence type="ECO:0000255" key="2"/>
<evidence type="ECO:0000255" key="3">
    <source>
        <dbReference type="PROSITE-ProRule" id="PRU00078"/>
    </source>
</evidence>
<evidence type="ECO:0000255" key="4">
    <source>
        <dbReference type="PROSITE-ProRule" id="PRU00079"/>
    </source>
</evidence>
<evidence type="ECO:0000305" key="5"/>
<name>EXB13_ORYSJ</name>
<dbReference type="EMBL" id="AF391106">
    <property type="protein sequence ID" value="AAL24476.1"/>
    <property type="status" value="ALT_SEQ"/>
    <property type="molecule type" value="Genomic_DNA"/>
</dbReference>
<dbReference type="EMBL" id="AC107224">
    <property type="protein sequence ID" value="AAN60489.1"/>
    <property type="molecule type" value="Genomic_DNA"/>
</dbReference>
<dbReference type="EMBL" id="DP000009">
    <property type="protein sequence ID" value="ABF93538.1"/>
    <property type="molecule type" value="Genomic_DNA"/>
</dbReference>
<dbReference type="EMBL" id="AP008209">
    <property type="protein sequence ID" value="BAF10601.1"/>
    <property type="molecule type" value="Genomic_DNA"/>
</dbReference>
<dbReference type="EMBL" id="AP014959">
    <property type="protein sequence ID" value="BAS81875.1"/>
    <property type="molecule type" value="Genomic_DNA"/>
</dbReference>
<dbReference type="SMR" id="Q946J4"/>
<dbReference type="FunCoup" id="Q946J4">
    <property type="interactions" value="9"/>
</dbReference>
<dbReference type="STRING" id="39947.Q946J4"/>
<dbReference type="Allergome" id="499">
    <property type="allergen name" value="Ory s 1"/>
</dbReference>
<dbReference type="GlyCosmos" id="Q946J4">
    <property type="glycosylation" value="1 site, No reported glycans"/>
</dbReference>
<dbReference type="PaxDb" id="39947-Q946J4"/>
<dbReference type="EnsemblPlants" id="Os03t0106700-00">
    <property type="protein sequence ID" value="Os03t0106700-00"/>
    <property type="gene ID" value="Os03g0106700"/>
</dbReference>
<dbReference type="Gramene" id="Os03t0106700-00">
    <property type="protein sequence ID" value="Os03t0106700-00"/>
    <property type="gene ID" value="Os03g0106700"/>
</dbReference>
<dbReference type="KEGG" id="dosa:Os03g0106700"/>
<dbReference type="HOGENOM" id="CLU_027462_1_1_1"/>
<dbReference type="InParanoid" id="Q946J4"/>
<dbReference type="OMA" id="PKACSDK"/>
<dbReference type="Proteomes" id="UP000000763">
    <property type="component" value="Chromosome 3"/>
</dbReference>
<dbReference type="Proteomes" id="UP000059680">
    <property type="component" value="Chromosome 3"/>
</dbReference>
<dbReference type="GO" id="GO:0005576">
    <property type="term" value="C:extracellular region"/>
    <property type="evidence" value="ECO:0007669"/>
    <property type="project" value="UniProtKB-KW"/>
</dbReference>
<dbReference type="GO" id="GO:0016020">
    <property type="term" value="C:membrane"/>
    <property type="evidence" value="ECO:0007669"/>
    <property type="project" value="UniProtKB-SubCell"/>
</dbReference>
<dbReference type="GO" id="GO:0009828">
    <property type="term" value="P:plant-type cell wall loosening"/>
    <property type="evidence" value="ECO:0000250"/>
    <property type="project" value="UniProtKB"/>
</dbReference>
<dbReference type="GO" id="GO:0019953">
    <property type="term" value="P:sexual reproduction"/>
    <property type="evidence" value="ECO:0007669"/>
    <property type="project" value="InterPro"/>
</dbReference>
<dbReference type="CDD" id="cd22275">
    <property type="entry name" value="DPBB_EXPB_N"/>
    <property type="match status" value="1"/>
</dbReference>
<dbReference type="Gene3D" id="2.60.40.760">
    <property type="entry name" value="Expansin, cellulose-binding-like domain"/>
    <property type="match status" value="1"/>
</dbReference>
<dbReference type="Gene3D" id="2.40.40.10">
    <property type="entry name" value="RlpA-like domain"/>
    <property type="match status" value="1"/>
</dbReference>
<dbReference type="InterPro" id="IPR007118">
    <property type="entry name" value="Expan_Lol_pI"/>
</dbReference>
<dbReference type="InterPro" id="IPR007112">
    <property type="entry name" value="Expansin/allergen_DPBB_dom"/>
</dbReference>
<dbReference type="InterPro" id="IPR007117">
    <property type="entry name" value="Expansin_CBD"/>
</dbReference>
<dbReference type="InterPro" id="IPR036749">
    <property type="entry name" value="Expansin_CBD_sf"/>
</dbReference>
<dbReference type="InterPro" id="IPR005795">
    <property type="entry name" value="LolPI"/>
</dbReference>
<dbReference type="InterPro" id="IPR009009">
    <property type="entry name" value="RlpA-like_DPBB"/>
</dbReference>
<dbReference type="InterPro" id="IPR036908">
    <property type="entry name" value="RlpA-like_sf"/>
</dbReference>
<dbReference type="PANTHER" id="PTHR31692:SF21">
    <property type="entry name" value="EXPANSIN-B1"/>
    <property type="match status" value="1"/>
</dbReference>
<dbReference type="PANTHER" id="PTHR31692">
    <property type="entry name" value="EXPANSIN-B3"/>
    <property type="match status" value="1"/>
</dbReference>
<dbReference type="Pfam" id="PF03330">
    <property type="entry name" value="DPBB_1"/>
    <property type="match status" value="1"/>
</dbReference>
<dbReference type="Pfam" id="PF01357">
    <property type="entry name" value="Expansin_C"/>
    <property type="match status" value="1"/>
</dbReference>
<dbReference type="PRINTS" id="PR01225">
    <property type="entry name" value="EXPANSNFAMLY"/>
</dbReference>
<dbReference type="PRINTS" id="PR00829">
    <property type="entry name" value="LOLP1ALLERGN"/>
</dbReference>
<dbReference type="SUPFAM" id="SSF50685">
    <property type="entry name" value="Barwin-like endoglucanases"/>
    <property type="match status" value="1"/>
</dbReference>
<dbReference type="SUPFAM" id="SSF49590">
    <property type="entry name" value="PHL pollen allergen"/>
    <property type="match status" value="1"/>
</dbReference>
<dbReference type="PROSITE" id="PS50843">
    <property type="entry name" value="EXPANSIN_CBD"/>
    <property type="match status" value="1"/>
</dbReference>
<dbReference type="PROSITE" id="PS50842">
    <property type="entry name" value="EXPANSIN_EG45"/>
    <property type="match status" value="1"/>
</dbReference>
<keyword id="KW-0134">Cell wall</keyword>
<keyword id="KW-0961">Cell wall biogenesis/degradation</keyword>
<keyword id="KW-1015">Disulfide bond</keyword>
<keyword id="KW-0325">Glycoprotein</keyword>
<keyword id="KW-0472">Membrane</keyword>
<keyword id="KW-1185">Reference proteome</keyword>
<keyword id="KW-0964">Secreted</keyword>
<keyword id="KW-0732">Signal</keyword>
<organism>
    <name type="scientific">Oryza sativa subsp. japonica</name>
    <name type="common">Rice</name>
    <dbReference type="NCBI Taxonomy" id="39947"/>
    <lineage>
        <taxon>Eukaryota</taxon>
        <taxon>Viridiplantae</taxon>
        <taxon>Streptophyta</taxon>
        <taxon>Embryophyta</taxon>
        <taxon>Tracheophyta</taxon>
        <taxon>Spermatophyta</taxon>
        <taxon>Magnoliopsida</taxon>
        <taxon>Liliopsida</taxon>
        <taxon>Poales</taxon>
        <taxon>Poaceae</taxon>
        <taxon>BOP clade</taxon>
        <taxon>Oryzoideae</taxon>
        <taxon>Oryzeae</taxon>
        <taxon>Oryzinae</taxon>
        <taxon>Oryza</taxon>
        <taxon>Oryza sativa</taxon>
    </lineage>
</organism>
<reference key="1">
    <citation type="journal article" date="2001" name="Plant Physiol.">
        <title>Expression of beta-expansins is correlated with internodal elongation in deepwater rice.</title>
        <authorList>
            <person name="Lee Y."/>
            <person name="Kende H."/>
        </authorList>
    </citation>
    <scope>NUCLEOTIDE SEQUENCE [GENOMIC DNA]</scope>
</reference>
<reference key="2">
    <citation type="journal article" date="2005" name="Genome Res.">
        <title>Sequence, annotation, and analysis of synteny between rice chromosome 3 and diverged grass species.</title>
        <authorList>
            <consortium name="The rice chromosome 3 sequencing consortium"/>
            <person name="Buell C.R."/>
            <person name="Yuan Q."/>
            <person name="Ouyang S."/>
            <person name="Liu J."/>
            <person name="Zhu W."/>
            <person name="Wang A."/>
            <person name="Maiti R."/>
            <person name="Haas B."/>
            <person name="Wortman J."/>
            <person name="Pertea M."/>
            <person name="Jones K.M."/>
            <person name="Kim M."/>
            <person name="Overton L."/>
            <person name="Tsitrin T."/>
            <person name="Fadrosh D."/>
            <person name="Bera J."/>
            <person name="Weaver B."/>
            <person name="Jin S."/>
            <person name="Johri S."/>
            <person name="Reardon M."/>
            <person name="Webb K."/>
            <person name="Hill J."/>
            <person name="Moffat K."/>
            <person name="Tallon L."/>
            <person name="Van Aken S."/>
            <person name="Lewis M."/>
            <person name="Utterback T."/>
            <person name="Feldblyum T."/>
            <person name="Zismann V."/>
            <person name="Iobst S."/>
            <person name="Hsiao J."/>
            <person name="de Vazeille A.R."/>
            <person name="Salzberg S.L."/>
            <person name="White O."/>
            <person name="Fraser C.M."/>
            <person name="Yu Y."/>
            <person name="Kim H."/>
            <person name="Rambo T."/>
            <person name="Currie J."/>
            <person name="Collura K."/>
            <person name="Kernodle-Thompson S."/>
            <person name="Wei F."/>
            <person name="Kudrna K."/>
            <person name="Ammiraju J.S.S."/>
            <person name="Luo M."/>
            <person name="Goicoechea J.L."/>
            <person name="Wing R.A."/>
            <person name="Henry D."/>
            <person name="Oates R."/>
            <person name="Palmer M."/>
            <person name="Pries G."/>
            <person name="Saski C."/>
            <person name="Simmons J."/>
            <person name="Soderlund C."/>
            <person name="Nelson W."/>
            <person name="de la Bastide M."/>
            <person name="Spiegel L."/>
            <person name="Nascimento L."/>
            <person name="Huang E."/>
            <person name="Preston R."/>
            <person name="Zutavern T."/>
            <person name="Palmer L."/>
            <person name="O'Shaughnessy A."/>
            <person name="Dike S."/>
            <person name="McCombie W.R."/>
            <person name="Minx P."/>
            <person name="Cordum H."/>
            <person name="Wilson R."/>
            <person name="Jin W."/>
            <person name="Lee H.R."/>
            <person name="Jiang J."/>
            <person name="Jackson S."/>
        </authorList>
    </citation>
    <scope>NUCLEOTIDE SEQUENCE [LARGE SCALE GENOMIC DNA]</scope>
    <source>
        <strain>cv. Nipponbare</strain>
    </source>
</reference>
<reference key="3">
    <citation type="journal article" date="2005" name="Nature">
        <title>The map-based sequence of the rice genome.</title>
        <authorList>
            <consortium name="International rice genome sequencing project (IRGSP)"/>
        </authorList>
    </citation>
    <scope>NUCLEOTIDE SEQUENCE [LARGE SCALE GENOMIC DNA]</scope>
    <source>
        <strain>cv. Nipponbare</strain>
    </source>
</reference>
<reference key="4">
    <citation type="journal article" date="2008" name="Nucleic Acids Res.">
        <title>The rice annotation project database (RAP-DB): 2008 update.</title>
        <authorList>
            <consortium name="The rice annotation project (RAP)"/>
        </authorList>
    </citation>
    <scope>GENOME REANNOTATION</scope>
    <source>
        <strain>cv. Nipponbare</strain>
    </source>
</reference>
<reference key="5">
    <citation type="journal article" date="2013" name="Rice">
        <title>Improvement of the Oryza sativa Nipponbare reference genome using next generation sequence and optical map data.</title>
        <authorList>
            <person name="Kawahara Y."/>
            <person name="de la Bastide M."/>
            <person name="Hamilton J.P."/>
            <person name="Kanamori H."/>
            <person name="McCombie W.R."/>
            <person name="Ouyang S."/>
            <person name="Schwartz D.C."/>
            <person name="Tanaka T."/>
            <person name="Wu J."/>
            <person name="Zhou S."/>
            <person name="Childs K.L."/>
            <person name="Davidson R.M."/>
            <person name="Lin H."/>
            <person name="Quesada-Ocampo L."/>
            <person name="Vaillancourt B."/>
            <person name="Sakai H."/>
            <person name="Lee S.S."/>
            <person name="Kim J."/>
            <person name="Numa H."/>
            <person name="Itoh T."/>
            <person name="Buell C.R."/>
            <person name="Matsumoto T."/>
        </authorList>
    </citation>
    <scope>GENOME REANNOTATION</scope>
    <source>
        <strain>cv. Nipponbare</strain>
    </source>
</reference>
<reference key="6">
    <citation type="journal article" date="2004" name="Plant Mol. Biol.">
        <title>Nomenclature for members of the expansin superfamily of genes and proteins.</title>
        <authorList>
            <person name="Kende H."/>
            <person name="Bradford K.J."/>
            <person name="Brummell D.A."/>
            <person name="Cho H.-T."/>
            <person name="Cosgrove D.J."/>
            <person name="Fleming A.J."/>
            <person name="Gehring C."/>
            <person name="Lee Y."/>
            <person name="McQueen-Mason S.J."/>
            <person name="Rose J.K.C."/>
            <person name="Voesenek L.A.C."/>
        </authorList>
    </citation>
    <scope>NOMENCLATURE</scope>
</reference>
<feature type="signal peptide" evidence="2">
    <location>
        <begin position="1"/>
        <end position="22"/>
    </location>
</feature>
<feature type="chain" id="PRO_0000252024" description="Expansin-B13">
    <location>
        <begin position="23"/>
        <end position="228"/>
    </location>
</feature>
<feature type="domain" description="Expansin-like EG45" evidence="4">
    <location>
        <begin position="61"/>
        <end position="172"/>
    </location>
</feature>
<feature type="domain" description="Expansin-like CBD" evidence="3">
    <location>
        <begin position="142"/>
        <end position="223"/>
    </location>
</feature>
<feature type="glycosylation site" description="N-linked (GlcNAc...) asparagine" evidence="2">
    <location>
        <position position="32"/>
    </location>
</feature>
<feature type="disulfide bond" evidence="4">
    <location>
        <begin position="64"/>
        <end position="92"/>
    </location>
</feature>
<feature type="disulfide bond" evidence="4">
    <location>
        <begin position="100"/>
        <end position="106"/>
    </location>
</feature>
<comment type="function">
    <text evidence="1">May cause loosening and extension of plant cell walls by disrupting non-covalent bonding between cellulose microfibrils and matrix glucans. No enzymatic activity has been found. May be required for rapid internodal elongation in deepwater rice during submergence (By similarity).</text>
</comment>
<comment type="subcellular location">
    <subcellularLocation>
        <location evidence="1">Secreted</location>
        <location evidence="1">Cell wall</location>
    </subcellularLocation>
    <subcellularLocation>
        <location evidence="1">Membrane</location>
        <topology evidence="1">Peripheral membrane protein</topology>
    </subcellularLocation>
</comment>
<comment type="similarity">
    <text evidence="5">Belongs to the expansin family. Expansin B subfamily.</text>
</comment>
<comment type="sequence caution" evidence="5">
    <conflict type="erroneous gene model prediction">
        <sequence resource="EMBL-CDS" id="AAL24476"/>
    </conflict>
</comment>
<comment type="online information" name="EXPANSIN homepage">
    <link uri="https://www.dept.psu.edu/biology/groups/expansins/index.htm"/>
</comment>
<protein>
    <recommendedName>
        <fullName>Expansin-B13</fullName>
    </recommendedName>
    <alternativeName>
        <fullName>Beta-expansin-13</fullName>
    </alternativeName>
    <alternativeName>
        <fullName>OsEXPB13</fullName>
    </alternativeName>
    <alternativeName>
        <fullName>OsaEXPb1.4</fullName>
    </alternativeName>
</protein>
<accession>Q946J4</accession>
<accession>Q0DVY7</accession>
<accession>Q8H7T5</accession>